<organism>
    <name type="scientific">Actinobacillus pleuropneumoniae serotype 5b (strain L20)</name>
    <dbReference type="NCBI Taxonomy" id="416269"/>
    <lineage>
        <taxon>Bacteria</taxon>
        <taxon>Pseudomonadati</taxon>
        <taxon>Pseudomonadota</taxon>
        <taxon>Gammaproteobacteria</taxon>
        <taxon>Pasteurellales</taxon>
        <taxon>Pasteurellaceae</taxon>
        <taxon>Actinobacillus</taxon>
    </lineage>
</organism>
<keyword id="KW-0479">Metal-binding</keyword>
<keyword id="KW-1185">Reference proteome</keyword>
<keyword id="KW-0687">Ribonucleoprotein</keyword>
<keyword id="KW-0689">Ribosomal protein</keyword>
<keyword id="KW-0694">RNA-binding</keyword>
<keyword id="KW-0699">rRNA-binding</keyword>
<keyword id="KW-0862">Zinc</keyword>
<dbReference type="EMBL" id="CP000569">
    <property type="protein sequence ID" value="ABN74076.1"/>
    <property type="molecule type" value="Genomic_DNA"/>
</dbReference>
<dbReference type="RefSeq" id="WP_005597698.1">
    <property type="nucleotide sequence ID" value="NC_009053.1"/>
</dbReference>
<dbReference type="SMR" id="A3N0Z0"/>
<dbReference type="STRING" id="416269.APL_0982"/>
<dbReference type="EnsemblBacteria" id="ABN74076">
    <property type="protein sequence ID" value="ABN74076"/>
    <property type="gene ID" value="APL_0982"/>
</dbReference>
<dbReference type="GeneID" id="92744501"/>
<dbReference type="KEGG" id="apl:APL_0982"/>
<dbReference type="eggNOG" id="COG0254">
    <property type="taxonomic scope" value="Bacteria"/>
</dbReference>
<dbReference type="HOGENOM" id="CLU_114306_4_3_6"/>
<dbReference type="Proteomes" id="UP000001432">
    <property type="component" value="Chromosome"/>
</dbReference>
<dbReference type="GO" id="GO:1990904">
    <property type="term" value="C:ribonucleoprotein complex"/>
    <property type="evidence" value="ECO:0007669"/>
    <property type="project" value="UniProtKB-KW"/>
</dbReference>
<dbReference type="GO" id="GO:0005840">
    <property type="term" value="C:ribosome"/>
    <property type="evidence" value="ECO:0007669"/>
    <property type="project" value="UniProtKB-KW"/>
</dbReference>
<dbReference type="GO" id="GO:0046872">
    <property type="term" value="F:metal ion binding"/>
    <property type="evidence" value="ECO:0007669"/>
    <property type="project" value="UniProtKB-KW"/>
</dbReference>
<dbReference type="GO" id="GO:0019843">
    <property type="term" value="F:rRNA binding"/>
    <property type="evidence" value="ECO:0007669"/>
    <property type="project" value="UniProtKB-KW"/>
</dbReference>
<dbReference type="GO" id="GO:0003735">
    <property type="term" value="F:structural constituent of ribosome"/>
    <property type="evidence" value="ECO:0007669"/>
    <property type="project" value="InterPro"/>
</dbReference>
<dbReference type="GO" id="GO:0006412">
    <property type="term" value="P:translation"/>
    <property type="evidence" value="ECO:0007669"/>
    <property type="project" value="UniProtKB-UniRule"/>
</dbReference>
<dbReference type="FunFam" id="4.10.830.30:FF:000001">
    <property type="entry name" value="50S ribosomal protein L31"/>
    <property type="match status" value="1"/>
</dbReference>
<dbReference type="Gene3D" id="4.10.830.30">
    <property type="entry name" value="Ribosomal protein L31"/>
    <property type="match status" value="1"/>
</dbReference>
<dbReference type="HAMAP" id="MF_00501">
    <property type="entry name" value="Ribosomal_bL31_1"/>
    <property type="match status" value="1"/>
</dbReference>
<dbReference type="InterPro" id="IPR034704">
    <property type="entry name" value="Ribosomal_bL28/bL31-like_sf"/>
</dbReference>
<dbReference type="InterPro" id="IPR002150">
    <property type="entry name" value="Ribosomal_bL31"/>
</dbReference>
<dbReference type="InterPro" id="IPR027491">
    <property type="entry name" value="Ribosomal_bL31_A"/>
</dbReference>
<dbReference type="InterPro" id="IPR042105">
    <property type="entry name" value="Ribosomal_bL31_sf"/>
</dbReference>
<dbReference type="NCBIfam" id="TIGR00105">
    <property type="entry name" value="L31"/>
    <property type="match status" value="1"/>
</dbReference>
<dbReference type="NCBIfam" id="NF000612">
    <property type="entry name" value="PRK00019.1"/>
    <property type="match status" value="1"/>
</dbReference>
<dbReference type="NCBIfam" id="NF001809">
    <property type="entry name" value="PRK00528.1"/>
    <property type="match status" value="1"/>
</dbReference>
<dbReference type="PANTHER" id="PTHR33280">
    <property type="entry name" value="50S RIBOSOMAL PROTEIN L31, CHLOROPLASTIC"/>
    <property type="match status" value="1"/>
</dbReference>
<dbReference type="PANTHER" id="PTHR33280:SF6">
    <property type="entry name" value="LARGE RIBOSOMAL SUBUNIT PROTEIN BL31A"/>
    <property type="match status" value="1"/>
</dbReference>
<dbReference type="Pfam" id="PF01197">
    <property type="entry name" value="Ribosomal_L31"/>
    <property type="match status" value="1"/>
</dbReference>
<dbReference type="PRINTS" id="PR01249">
    <property type="entry name" value="RIBOSOMALL31"/>
</dbReference>
<dbReference type="SUPFAM" id="SSF143800">
    <property type="entry name" value="L28p-like"/>
    <property type="match status" value="1"/>
</dbReference>
<dbReference type="PROSITE" id="PS01143">
    <property type="entry name" value="RIBOSOMAL_L31"/>
    <property type="match status" value="1"/>
</dbReference>
<feature type="chain" id="PRO_1000126551" description="Large ribosomal subunit protein bL31">
    <location>
        <begin position="1"/>
        <end position="70"/>
    </location>
</feature>
<feature type="binding site" evidence="1">
    <location>
        <position position="16"/>
    </location>
    <ligand>
        <name>Zn(2+)</name>
        <dbReference type="ChEBI" id="CHEBI:29105"/>
    </ligand>
</feature>
<feature type="binding site" evidence="1">
    <location>
        <position position="18"/>
    </location>
    <ligand>
        <name>Zn(2+)</name>
        <dbReference type="ChEBI" id="CHEBI:29105"/>
    </ligand>
</feature>
<feature type="binding site" evidence="1">
    <location>
        <position position="37"/>
    </location>
    <ligand>
        <name>Zn(2+)</name>
        <dbReference type="ChEBI" id="CHEBI:29105"/>
    </ligand>
</feature>
<feature type="binding site" evidence="1">
    <location>
        <position position="40"/>
    </location>
    <ligand>
        <name>Zn(2+)</name>
        <dbReference type="ChEBI" id="CHEBI:29105"/>
    </ligand>
</feature>
<reference key="1">
    <citation type="journal article" date="2008" name="J. Bacteriol.">
        <title>The complete genome sequence of Actinobacillus pleuropneumoniae L20 (serotype 5b).</title>
        <authorList>
            <person name="Foote S.J."/>
            <person name="Bosse J.T."/>
            <person name="Bouevitch A.B."/>
            <person name="Langford P.R."/>
            <person name="Young N.M."/>
            <person name="Nash J.H.E."/>
        </authorList>
    </citation>
    <scope>NUCLEOTIDE SEQUENCE [LARGE SCALE GENOMIC DNA]</scope>
    <source>
        <strain>L20</strain>
    </source>
</reference>
<evidence type="ECO:0000255" key="1">
    <source>
        <dbReference type="HAMAP-Rule" id="MF_00501"/>
    </source>
</evidence>
<evidence type="ECO:0000305" key="2"/>
<gene>
    <name evidence="1" type="primary">rpmE</name>
    <name type="ordered locus">APL_0982</name>
</gene>
<proteinExistence type="inferred from homology"/>
<name>RL31_ACTP2</name>
<sequence>MKQGIHPEYTEITATCSCGNVIKTRSTVGKNLNLDVCGNCHPFYTGKQRVVDTGGRVERFNKRFSIPSTK</sequence>
<comment type="function">
    <text evidence="1">Binds the 23S rRNA.</text>
</comment>
<comment type="cofactor">
    <cofactor evidence="1">
        <name>Zn(2+)</name>
        <dbReference type="ChEBI" id="CHEBI:29105"/>
    </cofactor>
    <text evidence="1">Binds 1 zinc ion per subunit.</text>
</comment>
<comment type="subunit">
    <text evidence="1">Part of the 50S ribosomal subunit.</text>
</comment>
<comment type="similarity">
    <text evidence="1">Belongs to the bacterial ribosomal protein bL31 family. Type A subfamily.</text>
</comment>
<accession>A3N0Z0</accession>
<protein>
    <recommendedName>
        <fullName evidence="1">Large ribosomal subunit protein bL31</fullName>
    </recommendedName>
    <alternativeName>
        <fullName evidence="2">50S ribosomal protein L31</fullName>
    </alternativeName>
</protein>